<gene>
    <name evidence="1" type="primary">rpsP</name>
    <name type="ordered locus">EC55989_2898</name>
</gene>
<accession>B7LDJ8</accession>
<reference key="1">
    <citation type="journal article" date="2009" name="PLoS Genet.">
        <title>Organised genome dynamics in the Escherichia coli species results in highly diverse adaptive paths.</title>
        <authorList>
            <person name="Touchon M."/>
            <person name="Hoede C."/>
            <person name="Tenaillon O."/>
            <person name="Barbe V."/>
            <person name="Baeriswyl S."/>
            <person name="Bidet P."/>
            <person name="Bingen E."/>
            <person name="Bonacorsi S."/>
            <person name="Bouchier C."/>
            <person name="Bouvet O."/>
            <person name="Calteau A."/>
            <person name="Chiapello H."/>
            <person name="Clermont O."/>
            <person name="Cruveiller S."/>
            <person name="Danchin A."/>
            <person name="Diard M."/>
            <person name="Dossat C."/>
            <person name="Karoui M.E."/>
            <person name="Frapy E."/>
            <person name="Garry L."/>
            <person name="Ghigo J.M."/>
            <person name="Gilles A.M."/>
            <person name="Johnson J."/>
            <person name="Le Bouguenec C."/>
            <person name="Lescat M."/>
            <person name="Mangenot S."/>
            <person name="Martinez-Jehanne V."/>
            <person name="Matic I."/>
            <person name="Nassif X."/>
            <person name="Oztas S."/>
            <person name="Petit M.A."/>
            <person name="Pichon C."/>
            <person name="Rouy Z."/>
            <person name="Ruf C.S."/>
            <person name="Schneider D."/>
            <person name="Tourret J."/>
            <person name="Vacherie B."/>
            <person name="Vallenet D."/>
            <person name="Medigue C."/>
            <person name="Rocha E.P.C."/>
            <person name="Denamur E."/>
        </authorList>
    </citation>
    <scope>NUCLEOTIDE SEQUENCE [LARGE SCALE GENOMIC DNA]</scope>
    <source>
        <strain>55989 / EAEC</strain>
    </source>
</reference>
<organism>
    <name type="scientific">Escherichia coli (strain 55989 / EAEC)</name>
    <dbReference type="NCBI Taxonomy" id="585055"/>
    <lineage>
        <taxon>Bacteria</taxon>
        <taxon>Pseudomonadati</taxon>
        <taxon>Pseudomonadota</taxon>
        <taxon>Gammaproteobacteria</taxon>
        <taxon>Enterobacterales</taxon>
        <taxon>Enterobacteriaceae</taxon>
        <taxon>Escherichia</taxon>
    </lineage>
</organism>
<sequence length="82" mass="9191">MVTIRLARHGAKKRPFYQVVVADSRNARNGRFIERVGFFNPIASEKEEGTRLDLDRIAHWVGQGATISDRVAALIKEVNKAA</sequence>
<protein>
    <recommendedName>
        <fullName evidence="1">Small ribosomal subunit protein bS16</fullName>
    </recommendedName>
    <alternativeName>
        <fullName evidence="2">30S ribosomal protein S16</fullName>
    </alternativeName>
</protein>
<evidence type="ECO:0000255" key="1">
    <source>
        <dbReference type="HAMAP-Rule" id="MF_00385"/>
    </source>
</evidence>
<evidence type="ECO:0000305" key="2"/>
<feature type="chain" id="PRO_1000196395" description="Small ribosomal subunit protein bS16">
    <location>
        <begin position="1"/>
        <end position="82"/>
    </location>
</feature>
<comment type="similarity">
    <text evidence="1">Belongs to the bacterial ribosomal protein bS16 family.</text>
</comment>
<dbReference type="EMBL" id="CU928145">
    <property type="protein sequence ID" value="CAU98765.1"/>
    <property type="molecule type" value="Genomic_DNA"/>
</dbReference>
<dbReference type="RefSeq" id="WP_000256450.1">
    <property type="nucleotide sequence ID" value="NZ_CP028304.1"/>
</dbReference>
<dbReference type="SMR" id="B7LDJ8"/>
<dbReference type="GeneID" id="93774459"/>
<dbReference type="KEGG" id="eck:EC55989_2898"/>
<dbReference type="HOGENOM" id="CLU_100590_5_1_6"/>
<dbReference type="Proteomes" id="UP000000746">
    <property type="component" value="Chromosome"/>
</dbReference>
<dbReference type="GO" id="GO:0005737">
    <property type="term" value="C:cytoplasm"/>
    <property type="evidence" value="ECO:0007669"/>
    <property type="project" value="UniProtKB-ARBA"/>
</dbReference>
<dbReference type="GO" id="GO:0015935">
    <property type="term" value="C:small ribosomal subunit"/>
    <property type="evidence" value="ECO:0007669"/>
    <property type="project" value="TreeGrafter"/>
</dbReference>
<dbReference type="GO" id="GO:0003735">
    <property type="term" value="F:structural constituent of ribosome"/>
    <property type="evidence" value="ECO:0007669"/>
    <property type="project" value="InterPro"/>
</dbReference>
<dbReference type="GO" id="GO:0006412">
    <property type="term" value="P:translation"/>
    <property type="evidence" value="ECO:0007669"/>
    <property type="project" value="UniProtKB-UniRule"/>
</dbReference>
<dbReference type="FunFam" id="3.30.1320.10:FF:000001">
    <property type="entry name" value="30S ribosomal protein S16"/>
    <property type="match status" value="1"/>
</dbReference>
<dbReference type="Gene3D" id="3.30.1320.10">
    <property type="match status" value="1"/>
</dbReference>
<dbReference type="HAMAP" id="MF_00385">
    <property type="entry name" value="Ribosomal_bS16"/>
    <property type="match status" value="1"/>
</dbReference>
<dbReference type="InterPro" id="IPR000307">
    <property type="entry name" value="Ribosomal_bS16"/>
</dbReference>
<dbReference type="InterPro" id="IPR020592">
    <property type="entry name" value="Ribosomal_bS16_CS"/>
</dbReference>
<dbReference type="InterPro" id="IPR023803">
    <property type="entry name" value="Ribosomal_bS16_dom_sf"/>
</dbReference>
<dbReference type="NCBIfam" id="TIGR00002">
    <property type="entry name" value="S16"/>
    <property type="match status" value="1"/>
</dbReference>
<dbReference type="PANTHER" id="PTHR12919">
    <property type="entry name" value="30S RIBOSOMAL PROTEIN S16"/>
    <property type="match status" value="1"/>
</dbReference>
<dbReference type="PANTHER" id="PTHR12919:SF20">
    <property type="entry name" value="SMALL RIBOSOMAL SUBUNIT PROTEIN BS16M"/>
    <property type="match status" value="1"/>
</dbReference>
<dbReference type="Pfam" id="PF00886">
    <property type="entry name" value="Ribosomal_S16"/>
    <property type="match status" value="1"/>
</dbReference>
<dbReference type="SUPFAM" id="SSF54565">
    <property type="entry name" value="Ribosomal protein S16"/>
    <property type="match status" value="1"/>
</dbReference>
<dbReference type="PROSITE" id="PS00732">
    <property type="entry name" value="RIBOSOMAL_S16"/>
    <property type="match status" value="1"/>
</dbReference>
<keyword id="KW-1185">Reference proteome</keyword>
<keyword id="KW-0687">Ribonucleoprotein</keyword>
<keyword id="KW-0689">Ribosomal protein</keyword>
<proteinExistence type="inferred from homology"/>
<name>RS16_ECO55</name>